<sequence length="317" mass="35125">MCTGVRFSDDEGNTYFGRNLDWSFSYGETILVTPRGYHYDTVFGAGGKAKPNAVIGVGVVMADRPMYFDCANEHGLAIAGLNFPGYASFVHEPVEGTENVATFEFPLWVARNFDSVDEVEEALRNVTLVSQIVPGQQESLLHWFIGDGKRSIVVEQMADGMHVHHDDVDVLTNQPTFDFHMENLRNYMCVSNEMAEPTSWGKASLTAWGAGVGMHGIPGDVSSPSRFVRVAYTNAHYPQQNDEAANVSRLFHTLGSVQMVDGMAKMGDGQFERTLFTSGYSSKTNTYYMNTYDDPAIRSYAMADYDMDSSELISVAR</sequence>
<evidence type="ECO:0000250" key="1">
    <source>
        <dbReference type="UniProtKB" id="P54965"/>
    </source>
</evidence>
<evidence type="ECO:0000250" key="2">
    <source>
        <dbReference type="UniProtKB" id="Q9KK62"/>
    </source>
</evidence>
<evidence type="ECO:0000269" key="3">
    <source>
    </source>
</evidence>
<evidence type="ECO:0000303" key="4">
    <source>
    </source>
</evidence>
<evidence type="ECO:0000305" key="5"/>
<evidence type="ECO:0000305" key="6">
    <source>
    </source>
</evidence>
<evidence type="ECO:0000312" key="7">
    <source>
        <dbReference type="EMBL" id="BAJ66485.1"/>
    </source>
</evidence>
<protein>
    <recommendedName>
        <fullName evidence="6">Bile salt hydrolase/transferase</fullName>
        <shortName evidence="6">BSH/T</shortName>
    </recommendedName>
    <alternativeName>
        <fullName evidence="4">Bile acid amine N-acyltransferase</fullName>
        <ecNumber evidence="3">2.3.1.-</ecNumber>
    </alternativeName>
    <alternativeName>
        <fullName evidence="4">Bile salt hydrolase</fullName>
        <shortName evidence="4">BSH</shortName>
    </alternativeName>
    <alternativeName>
        <fullName evidence="2">Chenodeoxycholoyltaurine hydrolase</fullName>
        <ecNumber evidence="2">3.5.1.74</ecNumber>
    </alternativeName>
    <alternativeName>
        <fullName evidence="2">Choloylglycine hydrolase</fullName>
        <ecNumber evidence="2">3.5.1.24</ecNumber>
    </alternativeName>
    <alternativeName>
        <fullName evidence="6">Conjugated bile acid hydrolase</fullName>
        <ecNumber evidence="3">3.5.1.-</ecNumber>
    </alternativeName>
</protein>
<comment type="function">
    <text evidence="2 3">Possesses dual functions in bile acid metabolism (PubMed:38326609). Acts as a bile salt hydrolase that catalyzes the deconjugation of glycine- and taurine-linked bile salts, which occurs naturally in the intestines of humans, releasing amino acid residues and deconjugated bile salts (bile acids) (PubMed:38326609). Can hydrolyze the amide bond in all six major human conjugated bile salts, namely glycocholate (GCA), glycodeoxycholate (GDCA), glycochenodeoxycholate (GCDCA), taurocholate (TCA), taurodeoxycholate (TDCA) and taurochenodeoxycholate (TCDCA). Shows a slight preference for glycine-conjugated bile acids as substrates (By similarity). Also acts as an amine N-acyltransferase that conjugates a wide variety of amino acids to conjugated and non-conjugated bile acids, thus producing bacterial bile acid amidates (BBAAs) - also named microbially conjugated bile acids (MCBAs) - in the gastrointestinal tract. These BBAAs may facilitate communication between the microbiota and host through the activation of human ligand-activated transcription factors (PubMed:38326609).</text>
</comment>
<comment type="catalytic activity">
    <reaction evidence="2">
        <text>glycocholate + H2O = cholate + glycine</text>
        <dbReference type="Rhea" id="RHEA:19353"/>
        <dbReference type="ChEBI" id="CHEBI:15377"/>
        <dbReference type="ChEBI" id="CHEBI:29746"/>
        <dbReference type="ChEBI" id="CHEBI:29747"/>
        <dbReference type="ChEBI" id="CHEBI:57305"/>
        <dbReference type="EC" id="3.5.1.24"/>
    </reaction>
    <physiologicalReaction direction="left-to-right" evidence="2">
        <dbReference type="Rhea" id="RHEA:19354"/>
    </physiologicalReaction>
</comment>
<comment type="catalytic activity">
    <reaction evidence="2">
        <text>glycodeoxycholate + H2O = deoxycholate + glycine</text>
        <dbReference type="Rhea" id="RHEA:47552"/>
        <dbReference type="ChEBI" id="CHEBI:15377"/>
        <dbReference type="ChEBI" id="CHEBI:23614"/>
        <dbReference type="ChEBI" id="CHEBI:57305"/>
        <dbReference type="ChEBI" id="CHEBI:82982"/>
    </reaction>
    <physiologicalReaction direction="left-to-right" evidence="2">
        <dbReference type="Rhea" id="RHEA:47553"/>
    </physiologicalReaction>
</comment>
<comment type="catalytic activity">
    <reaction evidence="2">
        <text>chenodeoxycholate + glycine = glycochenodeoxycholate + H2O</text>
        <dbReference type="Rhea" id="RHEA:47112"/>
        <dbReference type="ChEBI" id="CHEBI:15377"/>
        <dbReference type="ChEBI" id="CHEBI:36234"/>
        <dbReference type="ChEBI" id="CHEBI:36252"/>
        <dbReference type="ChEBI" id="CHEBI:57305"/>
    </reaction>
    <physiologicalReaction direction="right-to-left" evidence="2">
        <dbReference type="Rhea" id="RHEA:47114"/>
    </physiologicalReaction>
</comment>
<comment type="catalytic activity">
    <reaction evidence="3">
        <text>cholate + taurine = taurocholate + H2O</text>
        <dbReference type="Rhea" id="RHEA:47108"/>
        <dbReference type="ChEBI" id="CHEBI:15377"/>
        <dbReference type="ChEBI" id="CHEBI:29747"/>
        <dbReference type="ChEBI" id="CHEBI:36257"/>
        <dbReference type="ChEBI" id="CHEBI:507393"/>
    </reaction>
    <physiologicalReaction direction="right-to-left" evidence="6">
        <dbReference type="Rhea" id="RHEA:47110"/>
    </physiologicalReaction>
</comment>
<comment type="catalytic activity">
    <reaction evidence="2">
        <text>taurodeoxycholate + H2O = deoxycholate + taurine</text>
        <dbReference type="Rhea" id="RHEA:47556"/>
        <dbReference type="ChEBI" id="CHEBI:15377"/>
        <dbReference type="ChEBI" id="CHEBI:23614"/>
        <dbReference type="ChEBI" id="CHEBI:36261"/>
        <dbReference type="ChEBI" id="CHEBI:507393"/>
    </reaction>
    <physiologicalReaction direction="left-to-right" evidence="2">
        <dbReference type="Rhea" id="RHEA:47557"/>
    </physiologicalReaction>
</comment>
<comment type="catalytic activity">
    <reaction evidence="2">
        <text>taurochenodeoxycholate + H2O = chenodeoxycholate + taurine</text>
        <dbReference type="Rhea" id="RHEA:16309"/>
        <dbReference type="ChEBI" id="CHEBI:9407"/>
        <dbReference type="ChEBI" id="CHEBI:15377"/>
        <dbReference type="ChEBI" id="CHEBI:36234"/>
        <dbReference type="ChEBI" id="CHEBI:507393"/>
        <dbReference type="EC" id="3.5.1.74"/>
    </reaction>
    <physiologicalReaction direction="left-to-right" evidence="2">
        <dbReference type="Rhea" id="RHEA:16310"/>
    </physiologicalReaction>
</comment>
<comment type="catalytic activity">
    <reaction evidence="3">
        <text>an L-alpha-amino acid + cholate = an N-choloyl-L-alpha-amino acid + H2O</text>
        <dbReference type="Rhea" id="RHEA:79087"/>
        <dbReference type="ChEBI" id="CHEBI:15377"/>
        <dbReference type="ChEBI" id="CHEBI:29747"/>
        <dbReference type="ChEBI" id="CHEBI:59869"/>
        <dbReference type="ChEBI" id="CHEBI:229709"/>
    </reaction>
    <physiologicalReaction direction="left-to-right" evidence="6">
        <dbReference type="Rhea" id="RHEA:79088"/>
    </physiologicalReaction>
</comment>
<comment type="catalytic activity">
    <reaction evidence="3">
        <text>an L-alpha-amino acid + taurocholate = an N-choloyl-L-alpha-amino acid + taurine</text>
        <dbReference type="Rhea" id="RHEA:79091"/>
        <dbReference type="ChEBI" id="CHEBI:36257"/>
        <dbReference type="ChEBI" id="CHEBI:59869"/>
        <dbReference type="ChEBI" id="CHEBI:229709"/>
        <dbReference type="ChEBI" id="CHEBI:507393"/>
    </reaction>
    <physiologicalReaction direction="left-to-right" evidence="6">
        <dbReference type="Rhea" id="RHEA:79092"/>
    </physiologicalReaction>
</comment>
<comment type="catalytic activity">
    <reaction evidence="3">
        <text>cholate + L-alanine = L-alanocholate + H2O</text>
        <dbReference type="Rhea" id="RHEA:79131"/>
        <dbReference type="ChEBI" id="CHEBI:15377"/>
        <dbReference type="ChEBI" id="CHEBI:29747"/>
        <dbReference type="ChEBI" id="CHEBI:57972"/>
        <dbReference type="ChEBI" id="CHEBI:229710"/>
    </reaction>
    <physiologicalReaction direction="left-to-right" evidence="6">
        <dbReference type="Rhea" id="RHEA:79132"/>
    </physiologicalReaction>
</comment>
<comment type="catalytic activity">
    <reaction evidence="3">
        <text>taurocholate + L-alanine = L-alanocholate + taurine</text>
        <dbReference type="Rhea" id="RHEA:79135"/>
        <dbReference type="ChEBI" id="CHEBI:36257"/>
        <dbReference type="ChEBI" id="CHEBI:57972"/>
        <dbReference type="ChEBI" id="CHEBI:229710"/>
        <dbReference type="ChEBI" id="CHEBI:507393"/>
    </reaction>
    <physiologicalReaction direction="left-to-right" evidence="6">
        <dbReference type="Rhea" id="RHEA:79136"/>
    </physiologicalReaction>
</comment>
<comment type="catalytic activity">
    <reaction evidence="3">
        <text>cholate + L-serine = L-serocholate + H2O</text>
        <dbReference type="Rhea" id="RHEA:79139"/>
        <dbReference type="ChEBI" id="CHEBI:15377"/>
        <dbReference type="ChEBI" id="CHEBI:29747"/>
        <dbReference type="ChEBI" id="CHEBI:33384"/>
        <dbReference type="ChEBI" id="CHEBI:229711"/>
    </reaction>
    <physiologicalReaction direction="left-to-right" evidence="6">
        <dbReference type="Rhea" id="RHEA:79140"/>
    </physiologicalReaction>
</comment>
<comment type="catalytic activity">
    <reaction evidence="3">
        <text>taurocholate + L-serine = L-serocholate + taurine</text>
        <dbReference type="Rhea" id="RHEA:79143"/>
        <dbReference type="ChEBI" id="CHEBI:33384"/>
        <dbReference type="ChEBI" id="CHEBI:36257"/>
        <dbReference type="ChEBI" id="CHEBI:229711"/>
        <dbReference type="ChEBI" id="CHEBI:507393"/>
    </reaction>
    <physiologicalReaction direction="left-to-right" evidence="6">
        <dbReference type="Rhea" id="RHEA:79144"/>
    </physiologicalReaction>
</comment>
<comment type="catalytic activity">
    <reaction evidence="3">
        <text>cholate + L-histidine = L-histidocholate + H2O</text>
        <dbReference type="Rhea" id="RHEA:79099"/>
        <dbReference type="ChEBI" id="CHEBI:15377"/>
        <dbReference type="ChEBI" id="CHEBI:29747"/>
        <dbReference type="ChEBI" id="CHEBI:57595"/>
        <dbReference type="ChEBI" id="CHEBI:229712"/>
    </reaction>
    <physiologicalReaction direction="left-to-right" evidence="6">
        <dbReference type="Rhea" id="RHEA:79100"/>
    </physiologicalReaction>
</comment>
<comment type="catalytic activity">
    <reaction evidence="3">
        <text>taurocholate + L-histidine = L-histidocholate + taurine</text>
        <dbReference type="Rhea" id="RHEA:79103"/>
        <dbReference type="ChEBI" id="CHEBI:36257"/>
        <dbReference type="ChEBI" id="CHEBI:57595"/>
        <dbReference type="ChEBI" id="CHEBI:229712"/>
        <dbReference type="ChEBI" id="CHEBI:507393"/>
    </reaction>
    <physiologicalReaction direction="left-to-right" evidence="6">
        <dbReference type="Rhea" id="RHEA:79104"/>
    </physiologicalReaction>
</comment>
<comment type="pathway">
    <text evidence="3">Lipid metabolism; bile acid biosynthesis.</text>
</comment>
<comment type="subunit">
    <text evidence="2">Homotetramer. The tetramer consists of a dimer of dimers.</text>
</comment>
<comment type="induction">
    <text evidence="3">Up-regulated in the presence of a mixture of unconjugated bile acids cholate (CA) and deoxycholate (DCA).</text>
</comment>
<comment type="similarity">
    <text evidence="5">Belongs to the peptidase C59 family.</text>
</comment>
<reference key="1">
    <citation type="journal article" date="2011" name="Nature">
        <title>Bifidobacteria can protect from enteropathogenic infection through production of acetate.</title>
        <authorList>
            <person name="Fukuda S."/>
            <person name="Toh H."/>
            <person name="Hase K."/>
            <person name="Oshima K."/>
            <person name="Nakanishi Y."/>
            <person name="Yoshimura K."/>
            <person name="Tobe T."/>
            <person name="Clarke J.M."/>
            <person name="Topping D.L."/>
            <person name="Suzuki T."/>
            <person name="Taylor T.D."/>
            <person name="Itoh K."/>
            <person name="Kikuchi J."/>
            <person name="Morita H."/>
            <person name="Hattori M."/>
            <person name="Ohno H."/>
        </authorList>
    </citation>
    <scope>NUCLEOTIDE SEQUENCE [LARGE SCALE GENOMIC DNA]</scope>
    <source>
        <strain>ATCC 15707 / DSM 20219 / CCUG 28903 / JCM 1217 / NCIMB 702259 / NCTC 11818 / E194b</strain>
    </source>
</reference>
<reference key="2">
    <citation type="journal article" date="2024" name="Nature">
        <title>Bile salt hydrolase catalyses formation of amine-conjugated bile acids.</title>
        <authorList>
            <person name="Rimal B."/>
            <person name="Collins S.L."/>
            <person name="Tanes C.E."/>
            <person name="Rocha E.R."/>
            <person name="Granda M.A."/>
            <person name="Solanki S."/>
            <person name="Hoque N.J."/>
            <person name="Gentry E.C."/>
            <person name="Koo I."/>
            <person name="Reilly E.R."/>
            <person name="Hao F."/>
            <person name="Paudel D."/>
            <person name="Singh V."/>
            <person name="Yan T."/>
            <person name="Kim M.S."/>
            <person name="Bittinger K."/>
            <person name="Zackular J.P."/>
            <person name="Krausz K.W."/>
            <person name="Desai D."/>
            <person name="Amin S."/>
            <person name="Coleman J.P."/>
            <person name="Shah Y.M."/>
            <person name="Bisanz J.E."/>
            <person name="Gonzalez F.J."/>
            <person name="Vanden Heuvel J.P."/>
            <person name="Wu G.D."/>
            <person name="Zemel B.S."/>
            <person name="Dorrestein P.C."/>
            <person name="Weinert E.E."/>
            <person name="Patterson A.D."/>
        </authorList>
    </citation>
    <scope>FUNCTION</scope>
    <scope>CATALYTIC ACTIVITY</scope>
    <scope>INDUCTION BY CA AND DCA</scope>
    <scope>MUTAGENESIS OF CYS-2; THR-3; ARG-18; TRP-22; THR-172; ASN-173; ARG-226; LYS-265 AND ASP-268</scope>
    <scope>ACTIVE SITE</scope>
    <source>
        <strain>ATCC 15707 / DSM 20219 / CCUG 28903 / JCM 1217 / NCIMB 702259 / NCTC 11818 / E194b</strain>
    </source>
</reference>
<organism>
    <name type="scientific">Bifidobacterium longum subsp. longum (strain ATCC 15707 / DSM 20219 / JCM 1217 / NCTC 11818 / E194b)</name>
    <dbReference type="NCBI Taxonomy" id="565042"/>
    <lineage>
        <taxon>Bacteria</taxon>
        <taxon>Bacillati</taxon>
        <taxon>Actinomycetota</taxon>
        <taxon>Actinomycetes</taxon>
        <taxon>Bifidobacteriales</taxon>
        <taxon>Bifidobacteriaceae</taxon>
        <taxon>Bifidobacterium</taxon>
    </lineage>
</organism>
<name>CBH_BIFL2</name>
<keyword id="KW-0378">Hydrolase</keyword>
<keyword id="KW-0443">Lipid metabolism</keyword>
<keyword id="KW-0808">Transferase</keyword>
<feature type="chain" id="PRO_0000460472" description="Bile salt hydrolase/transferase">
    <location>
        <begin position="1"/>
        <end position="317"/>
    </location>
</feature>
<feature type="active site" description="Nucleophile; acyl-thioester intermediate" evidence="6">
    <location>
        <position position="2"/>
    </location>
</feature>
<feature type="binding site" evidence="1">
    <location>
        <position position="2"/>
    </location>
    <ligand>
        <name>deoxycholate</name>
        <dbReference type="ChEBI" id="CHEBI:23614"/>
    </ligand>
</feature>
<feature type="binding site" evidence="1">
    <location>
        <position position="18"/>
    </location>
    <ligand>
        <name>deoxycholate</name>
        <dbReference type="ChEBI" id="CHEBI:23614"/>
    </ligand>
</feature>
<feature type="binding site" evidence="1">
    <location>
        <position position="82"/>
    </location>
    <ligand>
        <name>taurine</name>
        <dbReference type="ChEBI" id="CHEBI:507393"/>
    </ligand>
</feature>
<feature type="mutagenesis site" description="Loss of both hydrolase and acyltransferase activities." evidence="3">
    <original>C</original>
    <variation>A</variation>
    <location>
        <position position="2"/>
    </location>
</feature>
<feature type="mutagenesis site" description="Decrease in both hydrolase and acyltransferase activities." evidence="3">
    <original>T</original>
    <variation>A</variation>
    <location>
        <position position="3"/>
    </location>
</feature>
<feature type="mutagenesis site" description="Loss of both hydrolase and acyltransferase activities." evidence="3">
    <original>R</original>
    <variation>A</variation>
    <location>
        <position position="18"/>
    </location>
</feature>
<feature type="mutagenesis site" description="Decrease in both hydrolase and acyltransferase activities." evidence="3">
    <original>W</original>
    <variation>F</variation>
    <location>
        <position position="22"/>
    </location>
</feature>
<feature type="mutagenesis site" description="Decrease in both hydrolase and acyltransferase activities." evidence="3">
    <original>T</original>
    <variation>A</variation>
    <location>
        <position position="172"/>
    </location>
</feature>
<feature type="mutagenesis site" description="Loss of both hydrolase and acyltransferase activities." evidence="3">
    <original>N</original>
    <variation>A</variation>
    <location>
        <position position="173"/>
    </location>
</feature>
<feature type="mutagenesis site" description="Loss of both hydrolase and acyltransferase activities." evidence="3">
    <original>R</original>
    <variation>A</variation>
    <location>
        <position position="226"/>
    </location>
</feature>
<feature type="mutagenesis site" description="Decrease in both hydrolase and acyltransferase activities." evidence="3">
    <original>K</original>
    <variation>A</variation>
    <location>
        <position position="265"/>
    </location>
</feature>
<feature type="mutagenesis site" description="Decrease in both hydrolase and acyltransferase activities." evidence="3">
    <original>D</original>
    <variation>A</variation>
    <location>
        <position position="268"/>
    </location>
</feature>
<proteinExistence type="evidence at protein level"/>
<dbReference type="EC" id="2.3.1.-" evidence="3"/>
<dbReference type="EC" id="3.5.1.74" evidence="2"/>
<dbReference type="EC" id="3.5.1.24" evidence="2"/>
<dbReference type="EC" id="3.5.1.-" evidence="3"/>
<dbReference type="EMBL" id="AP010888">
    <property type="protein sequence ID" value="BAJ66485.1"/>
    <property type="molecule type" value="Genomic_DNA"/>
</dbReference>
<dbReference type="RefSeq" id="WP_007052221.1">
    <property type="nucleotide sequence ID" value="NC_015067.1"/>
</dbReference>
<dbReference type="SMR" id="P0DXD2"/>
<dbReference type="GeneID" id="69578051"/>
<dbReference type="KEGG" id="blm:BLLJ_0817"/>
<dbReference type="UniPathway" id="UPA00221"/>
<dbReference type="GO" id="GO:0016787">
    <property type="term" value="F:hydrolase activity"/>
    <property type="evidence" value="ECO:0007669"/>
    <property type="project" value="UniProtKB-KW"/>
</dbReference>
<dbReference type="GO" id="GO:0016740">
    <property type="term" value="F:transferase activity"/>
    <property type="evidence" value="ECO:0007669"/>
    <property type="project" value="UniProtKB-KW"/>
</dbReference>
<dbReference type="GO" id="GO:0006629">
    <property type="term" value="P:lipid metabolic process"/>
    <property type="evidence" value="ECO:0007669"/>
    <property type="project" value="UniProtKB-KW"/>
</dbReference>
<dbReference type="CDD" id="cd00542">
    <property type="entry name" value="Ntn_PVA"/>
    <property type="match status" value="1"/>
</dbReference>
<dbReference type="FunFam" id="3.60.60.10:FF:000004">
    <property type="entry name" value="Bile salt hydrolase"/>
    <property type="match status" value="1"/>
</dbReference>
<dbReference type="Gene3D" id="3.60.60.10">
    <property type="entry name" value="Penicillin V Acylase, Chain A"/>
    <property type="match status" value="1"/>
</dbReference>
<dbReference type="InterPro" id="IPR047711">
    <property type="entry name" value="CBAH"/>
</dbReference>
<dbReference type="InterPro" id="IPR029132">
    <property type="entry name" value="CBAH/NAAA_C"/>
</dbReference>
<dbReference type="InterPro" id="IPR029055">
    <property type="entry name" value="Ntn_hydrolases_N"/>
</dbReference>
<dbReference type="InterPro" id="IPR052193">
    <property type="entry name" value="Peptidase_C59"/>
</dbReference>
<dbReference type="NCBIfam" id="NF038245">
    <property type="entry name" value="bile_salt_hydro"/>
    <property type="match status" value="1"/>
</dbReference>
<dbReference type="PANTHER" id="PTHR35527">
    <property type="entry name" value="CHOLOYLGLYCINE HYDROLASE"/>
    <property type="match status" value="1"/>
</dbReference>
<dbReference type="PANTHER" id="PTHR35527:SF2">
    <property type="entry name" value="HYDROLASE"/>
    <property type="match status" value="1"/>
</dbReference>
<dbReference type="Pfam" id="PF02275">
    <property type="entry name" value="CBAH"/>
    <property type="match status" value="1"/>
</dbReference>
<dbReference type="SUPFAM" id="SSF56235">
    <property type="entry name" value="N-terminal nucleophile aminohydrolases (Ntn hydrolases)"/>
    <property type="match status" value="1"/>
</dbReference>
<gene>
    <name evidence="4" type="primary">bsh</name>
    <name evidence="7" type="ordered locus">BLLJ_0817</name>
    <name type="ORF">BLLJ_RS04195</name>
</gene>
<accession>P0DXD2</accession>